<protein>
    <recommendedName>
        <fullName evidence="7">Small ribosomal subunit protein bS6m</fullName>
    </recommendedName>
    <alternativeName>
        <fullName>37S ribosomal protein MRP17, mitochondrial</fullName>
    </alternativeName>
    <alternativeName>
        <fullName>YmS16</fullName>
    </alternativeName>
</protein>
<comment type="function">
    <text evidence="9 10">Component of the mitochondrial ribosome (mitoribosome), a dedicated translation machinery responsible for the synthesis of mitochondrial genome-encoded proteins, including at least some of the essential transmembrane subunits of the mitochondrial respiratory chain. The mitoribosomes are attached to the mitochondrial inner membrane and translation products are cotranslationally integrated into the membrane.</text>
</comment>
<comment type="subunit">
    <text evidence="1 5 6">Component of the mitochondrial small ribosomal subunit (mt-SSU). Mature yeast 74S mitochondrial ribosomes consist of a small (37S) and a large (54S) subunit. The 37S small subunit contains a 15S ribosomal RNA (15S mt-rRNA) and 34 different proteins. The 54S large subunit contains a 21S rRNA (21S mt-rRNA) and 46 different proteins.</text>
</comment>
<comment type="subcellular location">
    <subcellularLocation>
        <location evidence="2 3">Mitochondrion</location>
    </subcellularLocation>
    <text evidence="4">Mitoribosomes are tethered to the mitochondrial inner membrane and spatially aligned with the membrane insertion machinery through two distinct membrane contact sites, formed by the 21S rRNA expansion segment 96-ES1 and the inner membrane protein MBA1.</text>
</comment>
<comment type="similarity">
    <text evidence="8">Belongs to the bacterial ribosomal protein bS6 family.</text>
</comment>
<proteinExistence type="evidence at protein level"/>
<keyword id="KW-0002">3D-structure</keyword>
<keyword id="KW-0903">Direct protein sequencing</keyword>
<keyword id="KW-0496">Mitochondrion</keyword>
<keyword id="KW-1185">Reference proteome</keyword>
<keyword id="KW-0687">Ribonucleoprotein</keyword>
<keyword id="KW-0689">Ribosomal protein</keyword>
<sequence length="131" mass="15021">MLYELIGLVRITNSNAPKLEAKELSSTIGKLIIQNRGVVRDIVPMGIRYLPKIMKKDQEKHFRAYHFLMLFDSSAAVQSEILRTLKKDPRVIRSSIVKVDLDKQLDRASSLHRSLGKKSILELVNEDYQSI</sequence>
<accession>P28778</accession>
<accession>D6VXT4</accession>
<feature type="chain" id="PRO_0000087697" description="Small ribosomal subunit protein bS6m">
    <location>
        <begin position="1"/>
        <end position="131"/>
    </location>
</feature>
<feature type="strand" evidence="11">
    <location>
        <begin position="2"/>
        <end position="9"/>
    </location>
</feature>
<feature type="helix" evidence="11">
    <location>
        <begin position="19"/>
        <end position="34"/>
    </location>
</feature>
<feature type="strand" evidence="11">
    <location>
        <begin position="38"/>
        <end position="41"/>
    </location>
</feature>
<feature type="strand" evidence="11">
    <location>
        <begin position="44"/>
        <end position="49"/>
    </location>
</feature>
<feature type="strand" evidence="11">
    <location>
        <begin position="62"/>
        <end position="72"/>
    </location>
</feature>
<feature type="helix" evidence="11">
    <location>
        <begin position="75"/>
        <end position="86"/>
    </location>
</feature>
<feature type="strand" evidence="11">
    <location>
        <begin position="91"/>
        <end position="93"/>
    </location>
</feature>
<feature type="strand" evidence="11">
    <location>
        <begin position="96"/>
        <end position="99"/>
    </location>
</feature>
<feature type="helix" evidence="11">
    <location>
        <begin position="110"/>
        <end position="115"/>
    </location>
</feature>
<feature type="helix" evidence="11">
    <location>
        <begin position="120"/>
        <end position="124"/>
    </location>
</feature>
<reference key="1">
    <citation type="journal article" date="1992" name="Mol. Gen. Genet.">
        <title>Suppression of carboxy-terminal truncations of the yeast mitochondrial mRNA-specific translational activator PET122 by mutations in two new genes, MRP17 and PET127.</title>
        <authorList>
            <person name="Haffter P.T."/>
            <person name="Fox T.D."/>
        </authorList>
    </citation>
    <scope>NUCLEOTIDE SEQUENCE [GENOMIC DNA]</scope>
</reference>
<reference key="2">
    <citation type="journal article" date="1994" name="Nature">
        <title>Complete DNA sequence of yeast chromosome XI.</title>
        <authorList>
            <person name="Dujon B."/>
            <person name="Alexandraki D."/>
            <person name="Andre B."/>
            <person name="Ansorge W."/>
            <person name="Baladron V."/>
            <person name="Ballesta J.P.G."/>
            <person name="Banrevi A."/>
            <person name="Bolle P.-A."/>
            <person name="Bolotin-Fukuhara M."/>
            <person name="Bossier P."/>
            <person name="Bou G."/>
            <person name="Boyer J."/>
            <person name="Buitrago M.J."/>
            <person name="Cheret G."/>
            <person name="Colleaux L."/>
            <person name="Daignan-Fornier B."/>
            <person name="del Rey F."/>
            <person name="Dion C."/>
            <person name="Domdey H."/>
            <person name="Duesterhoeft A."/>
            <person name="Duesterhus S."/>
            <person name="Entian K.-D."/>
            <person name="Erfle H."/>
            <person name="Esteban P.F."/>
            <person name="Feldmann H."/>
            <person name="Fernandes L."/>
            <person name="Fobo G.M."/>
            <person name="Fritz C."/>
            <person name="Fukuhara H."/>
            <person name="Gabel C."/>
            <person name="Gaillon L."/>
            <person name="Garcia-Cantalejo J.M."/>
            <person name="Garcia-Ramirez J.J."/>
            <person name="Gent M.E."/>
            <person name="Ghazvini M."/>
            <person name="Goffeau A."/>
            <person name="Gonzalez A."/>
            <person name="Grothues D."/>
            <person name="Guerreiro P."/>
            <person name="Hegemann J.H."/>
            <person name="Hewitt N."/>
            <person name="Hilger F."/>
            <person name="Hollenberg C.P."/>
            <person name="Horaitis O."/>
            <person name="Indge K.J."/>
            <person name="Jacquier A."/>
            <person name="James C.M."/>
            <person name="Jauniaux J.-C."/>
            <person name="Jimenez A."/>
            <person name="Keuchel H."/>
            <person name="Kirchrath L."/>
            <person name="Kleine K."/>
            <person name="Koetter P."/>
            <person name="Legrain P."/>
            <person name="Liebl S."/>
            <person name="Louis E.J."/>
            <person name="Maia e Silva A."/>
            <person name="Marck C."/>
            <person name="Monnier A.-L."/>
            <person name="Moestl D."/>
            <person name="Mueller S."/>
            <person name="Obermaier B."/>
            <person name="Oliver S.G."/>
            <person name="Pallier C."/>
            <person name="Pascolo S."/>
            <person name="Pfeiffer F."/>
            <person name="Philippsen P."/>
            <person name="Planta R.J."/>
            <person name="Pohl F.M."/>
            <person name="Pohl T.M."/>
            <person name="Poehlmann R."/>
            <person name="Portetelle D."/>
            <person name="Purnelle B."/>
            <person name="Puzos V."/>
            <person name="Ramezani Rad M."/>
            <person name="Rasmussen S.W."/>
            <person name="Remacha M.A."/>
            <person name="Revuelta J.L."/>
            <person name="Richard G.-F."/>
            <person name="Rieger M."/>
            <person name="Rodrigues-Pousada C."/>
            <person name="Rose M."/>
            <person name="Rupp T."/>
            <person name="Santos M.A."/>
            <person name="Schwager C."/>
            <person name="Sensen C."/>
            <person name="Skala J."/>
            <person name="Soares H."/>
            <person name="Sor F."/>
            <person name="Stegemann J."/>
            <person name="Tettelin H."/>
            <person name="Thierry A."/>
            <person name="Tzermia M."/>
            <person name="Urrestarazu L.A."/>
            <person name="van Dyck L."/>
            <person name="van Vliet-Reedijk J.C."/>
            <person name="Valens M."/>
            <person name="Vandenbol M."/>
            <person name="Vilela C."/>
            <person name="Vissers S."/>
            <person name="von Wettstein D."/>
            <person name="Voss H."/>
            <person name="Wiemann S."/>
            <person name="Xu G."/>
            <person name="Zimmermann J."/>
            <person name="Haasemann M."/>
            <person name="Becker I."/>
            <person name="Mewes H.-W."/>
        </authorList>
    </citation>
    <scope>NUCLEOTIDE SEQUENCE [LARGE SCALE GENOMIC DNA]</scope>
    <source>
        <strain>ATCC 204508 / S288c</strain>
    </source>
</reference>
<reference key="3">
    <citation type="journal article" date="2014" name="G3 (Bethesda)">
        <title>The reference genome sequence of Saccharomyces cerevisiae: Then and now.</title>
        <authorList>
            <person name="Engel S.R."/>
            <person name="Dietrich F.S."/>
            <person name="Fisk D.G."/>
            <person name="Binkley G."/>
            <person name="Balakrishnan R."/>
            <person name="Costanzo M.C."/>
            <person name="Dwight S.S."/>
            <person name="Hitz B.C."/>
            <person name="Karra K."/>
            <person name="Nash R.S."/>
            <person name="Weng S."/>
            <person name="Wong E.D."/>
            <person name="Lloyd P."/>
            <person name="Skrzypek M.S."/>
            <person name="Miyasato S.R."/>
            <person name="Simison M."/>
            <person name="Cherry J.M."/>
        </authorList>
    </citation>
    <scope>GENOME REANNOTATION</scope>
    <source>
        <strain>ATCC 204508 / S288c</strain>
    </source>
</reference>
<reference key="4">
    <citation type="journal article" date="1996" name="Mol. Gen. Genet.">
        <title>AUR1, a novel gene conferring aureobasidin resistance on Saccharomyces cerevisiae: a study of defective morphologies in Aur1p-depleted cells.</title>
        <authorList>
            <person name="Hashida-Okado T."/>
            <person name="Ogawa A."/>
            <person name="Endo M."/>
            <person name="Yasumoto R."/>
            <person name="Takesako K."/>
            <person name="Kato I."/>
        </authorList>
    </citation>
    <scope>NUCLEOTIDE SEQUENCE [GENOMIC DNA]</scope>
    <source>
        <strain>AR9-4A</strain>
    </source>
</reference>
<reference key="5">
    <citation type="journal article" date="1997" name="Eur. J. Biochem.">
        <title>Identification and characterization of the genes for mitochondrial ribosomal proteins of Saccharomyces cerevisiae.</title>
        <authorList>
            <person name="Kitakawa M."/>
            <person name="Graack H.-R."/>
            <person name="Grohmann L."/>
            <person name="Goldschmidt-Reisin S."/>
            <person name="Herfurth E."/>
            <person name="Wittmann-Liebold B."/>
            <person name="Nishimura T."/>
            <person name="Isono K."/>
        </authorList>
    </citation>
    <scope>PROTEIN SEQUENCE OF 1-19</scope>
    <scope>SUBUNIT</scope>
    <source>
        <strain>07173</strain>
    </source>
</reference>
<reference key="6">
    <citation type="journal article" date="2002" name="Eur. J. Biochem.">
        <title>Tag-mediated isolation of yeast mitochondrial ribosome and mass spectrometric identification of its new components.</title>
        <authorList>
            <person name="Gan X."/>
            <person name="Kitakawa M."/>
            <person name="Yoshino K."/>
            <person name="Oshiro N."/>
            <person name="Yonezawa K."/>
            <person name="Isono K."/>
        </authorList>
    </citation>
    <scope>IDENTIFICATION IN THE MITOCHONDRIAL RIBOSOMAL SMALL COMPLEX</scope>
    <scope>IDENTIFICATION BY MASS SPECTROMETRY</scope>
</reference>
<reference key="7">
    <citation type="journal article" date="2003" name="Nature">
        <title>Global analysis of protein localization in budding yeast.</title>
        <authorList>
            <person name="Huh W.-K."/>
            <person name="Falvo J.V."/>
            <person name="Gerke L.C."/>
            <person name="Carroll A.S."/>
            <person name="Howson R.W."/>
            <person name="Weissman J.S."/>
            <person name="O'Shea E.K."/>
        </authorList>
    </citation>
    <scope>SUBCELLULAR LOCATION [LARGE SCALE ANALYSIS]</scope>
</reference>
<reference key="8">
    <citation type="journal article" date="2003" name="Proc. Natl. Acad. Sci. U.S.A.">
        <title>The proteome of Saccharomyces cerevisiae mitochondria.</title>
        <authorList>
            <person name="Sickmann A."/>
            <person name="Reinders J."/>
            <person name="Wagner Y."/>
            <person name="Joppich C."/>
            <person name="Zahedi R.P."/>
            <person name="Meyer H.E."/>
            <person name="Schoenfisch B."/>
            <person name="Perschil I."/>
            <person name="Chacinska A."/>
            <person name="Guiard B."/>
            <person name="Rehling P."/>
            <person name="Pfanner N."/>
            <person name="Meisinger C."/>
        </authorList>
    </citation>
    <scope>SUBCELLULAR LOCATION [LARGE SCALE ANALYSIS]</scope>
    <source>
        <strain>ATCC 76625 / YPH499</strain>
    </source>
</reference>
<reference key="9">
    <citation type="journal article" date="2012" name="Proc. Natl. Acad. Sci. U.S.A.">
        <title>N-terminal acetylome analyses and functional insights of the N-terminal acetyltransferase NatB.</title>
        <authorList>
            <person name="Van Damme P."/>
            <person name="Lasa M."/>
            <person name="Polevoda B."/>
            <person name="Gazquez C."/>
            <person name="Elosegui-Artola A."/>
            <person name="Kim D.S."/>
            <person name="De Juan-Pardo E."/>
            <person name="Demeyer K."/>
            <person name="Hole K."/>
            <person name="Larrea E."/>
            <person name="Timmerman E."/>
            <person name="Prieto J."/>
            <person name="Arnesen T."/>
            <person name="Sherman F."/>
            <person name="Gevaert K."/>
            <person name="Aldabe R."/>
        </authorList>
    </citation>
    <scope>IDENTIFICATION BY MASS SPECTROMETRY [LARGE SCALE ANALYSIS]</scope>
</reference>
<reference key="10">
    <citation type="journal article" date="2015" name="Nat. Commun.">
        <title>Organization of the mitochondrial translation machinery studied in situ by cryoelectron tomography.</title>
        <authorList>
            <person name="Pfeffer S."/>
            <person name="Woellhaf M.W."/>
            <person name="Herrmann J.M."/>
            <person name="Forster F."/>
        </authorList>
    </citation>
    <scope>SUBCELLULAR LOCATION</scope>
</reference>
<reference key="11">
    <citation type="journal article" date="2017" name="Science">
        <title>The structure of the yeast mitochondrial ribosome.</title>
        <authorList>
            <person name="Desai N."/>
            <person name="Brown A."/>
            <person name="Amunts A."/>
            <person name="Ramakrishnan V."/>
        </authorList>
    </citation>
    <scope>STRUCTURE BY ELECTRON MICROSCOPY (3.25 ANGSTROMS)</scope>
    <scope>SUBUNIT</scope>
</reference>
<dbReference type="EMBL" id="X58362">
    <property type="protein sequence ID" value="CAA41256.1"/>
    <property type="molecule type" value="Genomic_DNA"/>
</dbReference>
<dbReference type="EMBL" id="Z28003">
    <property type="protein sequence ID" value="CAA81835.1"/>
    <property type="molecule type" value="Genomic_DNA"/>
</dbReference>
<dbReference type="EMBL" id="U49090">
    <property type="protein sequence ID" value="AAB06941.1"/>
    <property type="molecule type" value="Genomic_DNA"/>
</dbReference>
<dbReference type="EMBL" id="BK006944">
    <property type="protein sequence ID" value="DAA09154.1"/>
    <property type="molecule type" value="Genomic_DNA"/>
</dbReference>
<dbReference type="PIR" id="S30119">
    <property type="entry name" value="S30119"/>
</dbReference>
<dbReference type="RefSeq" id="NP_012923.3">
    <property type="nucleotide sequence ID" value="NM_001179569.3"/>
</dbReference>
<dbReference type="PDB" id="5MRC">
    <property type="method" value="EM"/>
    <property type="resolution" value="3.25 A"/>
    <property type="chains" value="FF=1-125"/>
</dbReference>
<dbReference type="PDB" id="5MRE">
    <property type="method" value="EM"/>
    <property type="resolution" value="3.75 A"/>
    <property type="chains" value="FF=1-125"/>
</dbReference>
<dbReference type="PDB" id="5MRF">
    <property type="method" value="EM"/>
    <property type="resolution" value="4.97 A"/>
    <property type="chains" value="FF=1-125"/>
</dbReference>
<dbReference type="PDB" id="8D8J">
    <property type="method" value="EM"/>
    <property type="resolution" value="3.80 A"/>
    <property type="chains" value="F=1-131"/>
</dbReference>
<dbReference type="PDB" id="8D8K">
    <property type="method" value="EM"/>
    <property type="resolution" value="3.13 A"/>
    <property type="chains" value="F=1-131"/>
</dbReference>
<dbReference type="PDB" id="8D8L">
    <property type="method" value="EM"/>
    <property type="resolution" value="2.60 A"/>
    <property type="chains" value="F=1-131"/>
</dbReference>
<dbReference type="PDB" id="8OM2">
    <property type="method" value="EM"/>
    <property type="resolution" value="2.57 A"/>
    <property type="chains" value="F=1-131"/>
</dbReference>
<dbReference type="PDB" id="8OM3">
    <property type="method" value="EM"/>
    <property type="resolution" value="2.87 A"/>
    <property type="chains" value="F=1-131"/>
</dbReference>
<dbReference type="PDB" id="8OM4">
    <property type="method" value="EM"/>
    <property type="resolution" value="2.32 A"/>
    <property type="chains" value="F=1-131"/>
</dbReference>
<dbReference type="PDBsum" id="5MRC"/>
<dbReference type="PDBsum" id="5MRE"/>
<dbReference type="PDBsum" id="5MRF"/>
<dbReference type="PDBsum" id="8D8J"/>
<dbReference type="PDBsum" id="8D8K"/>
<dbReference type="PDBsum" id="8D8L"/>
<dbReference type="PDBsum" id="8OM2"/>
<dbReference type="PDBsum" id="8OM3"/>
<dbReference type="PDBsum" id="8OM4"/>
<dbReference type="EMDB" id="EMD-16966"/>
<dbReference type="EMDB" id="EMD-16967"/>
<dbReference type="EMDB" id="EMD-16968"/>
<dbReference type="EMDB" id="EMD-27249"/>
<dbReference type="EMDB" id="EMD-27250"/>
<dbReference type="EMDB" id="EMD-27251"/>
<dbReference type="EMDB" id="EMD-3551"/>
<dbReference type="EMDB" id="EMD-3552"/>
<dbReference type="EMDB" id="EMD-3553"/>
<dbReference type="SMR" id="P28778"/>
<dbReference type="BioGRID" id="34130">
    <property type="interactions" value="65"/>
</dbReference>
<dbReference type="ComplexPortal" id="CPX-1603">
    <property type="entry name" value="37S mitochondrial small ribosomal subunit"/>
</dbReference>
<dbReference type="DIP" id="DIP-6682N"/>
<dbReference type="FunCoup" id="P28778">
    <property type="interactions" value="353"/>
</dbReference>
<dbReference type="IntAct" id="P28778">
    <property type="interactions" value="43"/>
</dbReference>
<dbReference type="MINT" id="P28778"/>
<dbReference type="STRING" id="4932.YKL003C"/>
<dbReference type="PaxDb" id="4932-YKL003C"/>
<dbReference type="PeptideAtlas" id="P28778"/>
<dbReference type="EnsemblFungi" id="YKL003C_mRNA">
    <property type="protein sequence ID" value="YKL003C"/>
    <property type="gene ID" value="YKL003C"/>
</dbReference>
<dbReference type="GeneID" id="853867"/>
<dbReference type="KEGG" id="sce:YKL003C"/>
<dbReference type="AGR" id="SGD:S000001486"/>
<dbReference type="SGD" id="S000001486">
    <property type="gene designation" value="MRP17"/>
</dbReference>
<dbReference type="VEuPathDB" id="FungiDB:YKL003C"/>
<dbReference type="eggNOG" id="KOG4708">
    <property type="taxonomic scope" value="Eukaryota"/>
</dbReference>
<dbReference type="HOGENOM" id="CLU_126331_3_0_1"/>
<dbReference type="InParanoid" id="P28778"/>
<dbReference type="OMA" id="RGVQYWG"/>
<dbReference type="OrthoDB" id="10259681at2759"/>
<dbReference type="BioCyc" id="YEAST:G3O-31814-MONOMER"/>
<dbReference type="BioGRID-ORCS" id="853867">
    <property type="hits" value="1 hit in 10 CRISPR screens"/>
</dbReference>
<dbReference type="PRO" id="PR:P28778"/>
<dbReference type="Proteomes" id="UP000002311">
    <property type="component" value="Chromosome XI"/>
</dbReference>
<dbReference type="RNAct" id="P28778">
    <property type="molecule type" value="protein"/>
</dbReference>
<dbReference type="GO" id="GO:0005743">
    <property type="term" value="C:mitochondrial inner membrane"/>
    <property type="evidence" value="ECO:0000303"/>
    <property type="project" value="ComplexPortal"/>
</dbReference>
<dbReference type="GO" id="GO:0005763">
    <property type="term" value="C:mitochondrial small ribosomal subunit"/>
    <property type="evidence" value="ECO:0000314"/>
    <property type="project" value="SGD"/>
</dbReference>
<dbReference type="GO" id="GO:0005739">
    <property type="term" value="C:mitochondrion"/>
    <property type="evidence" value="ECO:0007005"/>
    <property type="project" value="SGD"/>
</dbReference>
<dbReference type="GO" id="GO:0070181">
    <property type="term" value="F:small ribosomal subunit rRNA binding"/>
    <property type="evidence" value="ECO:0000318"/>
    <property type="project" value="GO_Central"/>
</dbReference>
<dbReference type="GO" id="GO:0003735">
    <property type="term" value="F:structural constituent of ribosome"/>
    <property type="evidence" value="ECO:0000314"/>
    <property type="project" value="SGD"/>
</dbReference>
<dbReference type="GO" id="GO:0032543">
    <property type="term" value="P:mitochondrial translation"/>
    <property type="evidence" value="ECO:0000303"/>
    <property type="project" value="ComplexPortal"/>
</dbReference>
<dbReference type="CDD" id="cd15465">
    <property type="entry name" value="bS6_mito"/>
    <property type="match status" value="1"/>
</dbReference>
<dbReference type="FunFam" id="3.30.70.60:FF:000007">
    <property type="entry name" value="37S ribosomal protein Mrp17"/>
    <property type="match status" value="1"/>
</dbReference>
<dbReference type="Gene3D" id="3.30.70.60">
    <property type="match status" value="1"/>
</dbReference>
<dbReference type="InterPro" id="IPR000529">
    <property type="entry name" value="Ribosomal_bS6"/>
</dbReference>
<dbReference type="InterPro" id="IPR035980">
    <property type="entry name" value="Ribosomal_bS6_sf"/>
</dbReference>
<dbReference type="InterPro" id="IPR014717">
    <property type="entry name" value="Transl_elong_EF1B/ribsomal_bS6"/>
</dbReference>
<dbReference type="NCBIfam" id="TIGR00166">
    <property type="entry name" value="S6"/>
    <property type="match status" value="1"/>
</dbReference>
<dbReference type="PANTHER" id="PTHR21011">
    <property type="entry name" value="MITOCHONDRIAL 28S RIBOSOMAL PROTEIN S6"/>
    <property type="match status" value="1"/>
</dbReference>
<dbReference type="PANTHER" id="PTHR21011:SF1">
    <property type="entry name" value="SMALL RIBOSOMAL SUBUNIT PROTEIN BS6M"/>
    <property type="match status" value="1"/>
</dbReference>
<dbReference type="Pfam" id="PF01250">
    <property type="entry name" value="Ribosomal_S6"/>
    <property type="match status" value="1"/>
</dbReference>
<dbReference type="SUPFAM" id="SSF54995">
    <property type="entry name" value="Ribosomal protein S6"/>
    <property type="match status" value="1"/>
</dbReference>
<gene>
    <name type="primary">MRP17</name>
    <name type="ordered locus">YKL003C</name>
</gene>
<name>RT06_YEAST</name>
<evidence type="ECO:0000269" key="1">
    <source>
    </source>
</evidence>
<evidence type="ECO:0000269" key="2">
    <source>
    </source>
</evidence>
<evidence type="ECO:0000269" key="3">
    <source>
    </source>
</evidence>
<evidence type="ECO:0000269" key="4">
    <source>
    </source>
</evidence>
<evidence type="ECO:0000269" key="5">
    <source>
    </source>
</evidence>
<evidence type="ECO:0000269" key="6">
    <source>
    </source>
</evidence>
<evidence type="ECO:0000303" key="7">
    <source>
    </source>
</evidence>
<evidence type="ECO:0000305" key="8"/>
<evidence type="ECO:0000305" key="9">
    <source>
    </source>
</evidence>
<evidence type="ECO:0000305" key="10">
    <source>
    </source>
</evidence>
<evidence type="ECO:0007829" key="11">
    <source>
        <dbReference type="PDB" id="8D8L"/>
    </source>
</evidence>
<organism>
    <name type="scientific">Saccharomyces cerevisiae (strain ATCC 204508 / S288c)</name>
    <name type="common">Baker's yeast</name>
    <dbReference type="NCBI Taxonomy" id="559292"/>
    <lineage>
        <taxon>Eukaryota</taxon>
        <taxon>Fungi</taxon>
        <taxon>Dikarya</taxon>
        <taxon>Ascomycota</taxon>
        <taxon>Saccharomycotina</taxon>
        <taxon>Saccharomycetes</taxon>
        <taxon>Saccharomycetales</taxon>
        <taxon>Saccharomycetaceae</taxon>
        <taxon>Saccharomyces</taxon>
    </lineage>
</organism>